<gene>
    <name evidence="1" type="primary">sfsA</name>
    <name type="ordered locus">cce_2616</name>
</gene>
<evidence type="ECO:0000255" key="1">
    <source>
        <dbReference type="HAMAP-Rule" id="MF_00095"/>
    </source>
</evidence>
<protein>
    <recommendedName>
        <fullName evidence="1">Sugar fermentation stimulation protein homolog</fullName>
    </recommendedName>
</protein>
<name>SFSA_CROS5</name>
<reference key="1">
    <citation type="journal article" date="2008" name="Proc. Natl. Acad. Sci. U.S.A.">
        <title>The genome of Cyanothece 51142, a unicellular diazotrophic cyanobacterium important in the marine nitrogen cycle.</title>
        <authorList>
            <person name="Welsh E.A."/>
            <person name="Liberton M."/>
            <person name="Stoeckel J."/>
            <person name="Loh T."/>
            <person name="Elvitigala T."/>
            <person name="Wang C."/>
            <person name="Wollam A."/>
            <person name="Fulton R.S."/>
            <person name="Clifton S.W."/>
            <person name="Jacobs J.M."/>
            <person name="Aurora R."/>
            <person name="Ghosh B.K."/>
            <person name="Sherman L.A."/>
            <person name="Smith R.D."/>
            <person name="Wilson R.K."/>
            <person name="Pakrasi H.B."/>
        </authorList>
    </citation>
    <scope>NUCLEOTIDE SEQUENCE [LARGE SCALE GENOMIC DNA]</scope>
    <source>
        <strain>ATCC 51142 / BH68</strain>
    </source>
</reference>
<accession>B1WT42</accession>
<dbReference type="EMBL" id="CP000806">
    <property type="protein sequence ID" value="ACB51964.1"/>
    <property type="molecule type" value="Genomic_DNA"/>
</dbReference>
<dbReference type="RefSeq" id="WP_009544694.1">
    <property type="nucleotide sequence ID" value="NC_010546.1"/>
</dbReference>
<dbReference type="SMR" id="B1WT42"/>
<dbReference type="STRING" id="43989.cce_2616"/>
<dbReference type="KEGG" id="cyt:cce_2616"/>
<dbReference type="eggNOG" id="COG1489">
    <property type="taxonomic scope" value="Bacteria"/>
</dbReference>
<dbReference type="HOGENOM" id="CLU_052299_2_0_3"/>
<dbReference type="OrthoDB" id="9802365at2"/>
<dbReference type="Proteomes" id="UP000001203">
    <property type="component" value="Chromosome circular"/>
</dbReference>
<dbReference type="GO" id="GO:0003677">
    <property type="term" value="F:DNA binding"/>
    <property type="evidence" value="ECO:0007669"/>
    <property type="project" value="InterPro"/>
</dbReference>
<dbReference type="CDD" id="cd22359">
    <property type="entry name" value="SfsA-like_bacterial"/>
    <property type="match status" value="1"/>
</dbReference>
<dbReference type="Gene3D" id="2.40.50.580">
    <property type="match status" value="1"/>
</dbReference>
<dbReference type="Gene3D" id="3.40.1350.60">
    <property type="match status" value="1"/>
</dbReference>
<dbReference type="HAMAP" id="MF_00095">
    <property type="entry name" value="SfsA"/>
    <property type="match status" value="1"/>
</dbReference>
<dbReference type="InterPro" id="IPR005224">
    <property type="entry name" value="SfsA"/>
</dbReference>
<dbReference type="InterPro" id="IPR040452">
    <property type="entry name" value="SfsA_C"/>
</dbReference>
<dbReference type="InterPro" id="IPR041465">
    <property type="entry name" value="SfsA_N"/>
</dbReference>
<dbReference type="NCBIfam" id="TIGR00230">
    <property type="entry name" value="sfsA"/>
    <property type="match status" value="1"/>
</dbReference>
<dbReference type="PANTHER" id="PTHR30545">
    <property type="entry name" value="SUGAR FERMENTATION STIMULATION PROTEIN A"/>
    <property type="match status" value="1"/>
</dbReference>
<dbReference type="PANTHER" id="PTHR30545:SF2">
    <property type="entry name" value="SUGAR FERMENTATION STIMULATION PROTEIN A"/>
    <property type="match status" value="1"/>
</dbReference>
<dbReference type="Pfam" id="PF03749">
    <property type="entry name" value="SfsA"/>
    <property type="match status" value="1"/>
</dbReference>
<dbReference type="Pfam" id="PF17746">
    <property type="entry name" value="SfsA_N"/>
    <property type="match status" value="1"/>
</dbReference>
<comment type="similarity">
    <text evidence="1">Belongs to the SfsA family.</text>
</comment>
<organism>
    <name type="scientific">Crocosphaera subtropica (strain ATCC 51142 / BH68)</name>
    <name type="common">Cyanothece sp. (strain ATCC 51142)</name>
    <dbReference type="NCBI Taxonomy" id="43989"/>
    <lineage>
        <taxon>Bacteria</taxon>
        <taxon>Bacillati</taxon>
        <taxon>Cyanobacteriota</taxon>
        <taxon>Cyanophyceae</taxon>
        <taxon>Oscillatoriophycideae</taxon>
        <taxon>Chroococcales</taxon>
        <taxon>Aphanothecaceae</taxon>
        <taxon>Crocosphaera</taxon>
        <taxon>Crocosphaera subtropica</taxon>
    </lineage>
</organism>
<sequence>MNTDFVYTFPPLIPGILKRRYKRFLADIELESGEMITAHCANTGPMIGVCDAESQVYVSKSNNPKRKLAYSWELIEVDNTWVGINTALPNRVIKQILEQEKLPHLKGKYNKVRSEVPYGKDKKSRIDFVLTNESQQNPIYLEVKNTTLAKDKIALFPDTVTTRGQKHLQELMDLLPDAQPIMLYFINRGDCQQFSPGDDYDPGYGKLFREAVKKGVEILPCRFEITPQGIRYLGLADLKF</sequence>
<proteinExistence type="inferred from homology"/>
<keyword id="KW-1185">Reference proteome</keyword>
<feature type="chain" id="PRO_1000196966" description="Sugar fermentation stimulation protein homolog">
    <location>
        <begin position="1"/>
        <end position="240"/>
    </location>
</feature>